<evidence type="ECO:0000250" key="1"/>
<evidence type="ECO:0000255" key="2"/>
<evidence type="ECO:0000305" key="3"/>
<dbReference type="EC" id="3.1.3.16"/>
<dbReference type="EMBL" id="BC041756">
    <property type="protein sequence ID" value="AAH41756.1"/>
    <property type="status" value="ALT_FRAME"/>
    <property type="molecule type" value="mRNA"/>
</dbReference>
<dbReference type="EMBL" id="BC089282">
    <property type="protein sequence ID" value="AAH89282.1"/>
    <property type="molecule type" value="mRNA"/>
</dbReference>
<dbReference type="RefSeq" id="NP_001082456.1">
    <property type="nucleotide sequence ID" value="NM_001088987.1"/>
</dbReference>
<dbReference type="SMR" id="Q5FWM4"/>
<dbReference type="DNASU" id="398484"/>
<dbReference type="GeneID" id="398484"/>
<dbReference type="KEGG" id="xla:398484"/>
<dbReference type="AGR" id="Xenbase:XB-GENE-6256307"/>
<dbReference type="CTD" id="398484"/>
<dbReference type="Xenbase" id="XB-GENE-6256307">
    <property type="gene designation" value="pgam5.S"/>
</dbReference>
<dbReference type="OrthoDB" id="2118094at2759"/>
<dbReference type="Proteomes" id="UP000186698">
    <property type="component" value="Chromosome 1S"/>
</dbReference>
<dbReference type="Bgee" id="398484">
    <property type="expression patterns" value="Expressed in egg cell and 19 other cell types or tissues"/>
</dbReference>
<dbReference type="GO" id="GO:0005741">
    <property type="term" value="C:mitochondrial outer membrane"/>
    <property type="evidence" value="ECO:0007669"/>
    <property type="project" value="UniProtKB-SubCell"/>
</dbReference>
<dbReference type="GO" id="GO:0005739">
    <property type="term" value="C:mitochondrion"/>
    <property type="evidence" value="ECO:0000318"/>
    <property type="project" value="GO_Central"/>
</dbReference>
<dbReference type="GO" id="GO:0004722">
    <property type="term" value="F:protein serine/threonine phosphatase activity"/>
    <property type="evidence" value="ECO:0000318"/>
    <property type="project" value="GO_Central"/>
</dbReference>
<dbReference type="GO" id="GO:0090141">
    <property type="term" value="P:positive regulation of mitochondrial fission"/>
    <property type="evidence" value="ECO:0000318"/>
    <property type="project" value="GO_Central"/>
</dbReference>
<dbReference type="GO" id="GO:0012501">
    <property type="term" value="P:programmed cell death"/>
    <property type="evidence" value="ECO:0007669"/>
    <property type="project" value="UniProtKB-KW"/>
</dbReference>
<dbReference type="CDD" id="cd07067">
    <property type="entry name" value="HP_PGM_like"/>
    <property type="match status" value="1"/>
</dbReference>
<dbReference type="FunFam" id="3.40.50.1240:FF:000009">
    <property type="entry name" value="serine/threonine-protein phosphatase PGAM5, mitochondrial isoform X1"/>
    <property type="match status" value="1"/>
</dbReference>
<dbReference type="Gene3D" id="3.40.50.1240">
    <property type="entry name" value="Phosphoglycerate mutase-like"/>
    <property type="match status" value="1"/>
</dbReference>
<dbReference type="InterPro" id="IPR013078">
    <property type="entry name" value="His_Pase_superF_clade-1"/>
</dbReference>
<dbReference type="InterPro" id="IPR029033">
    <property type="entry name" value="His_PPase_superfam"/>
</dbReference>
<dbReference type="InterPro" id="IPR051021">
    <property type="entry name" value="Mito_Ser/Thr_phosphatase"/>
</dbReference>
<dbReference type="PANTHER" id="PTHR20935">
    <property type="entry name" value="PHOSPHOGLYCERATE MUTASE-RELATED"/>
    <property type="match status" value="1"/>
</dbReference>
<dbReference type="PANTHER" id="PTHR20935:SF0">
    <property type="entry name" value="SERINE_THREONINE-PROTEIN PHOSPHATASE PGAM5, MITOCHONDRIAL"/>
    <property type="match status" value="1"/>
</dbReference>
<dbReference type="Pfam" id="PF00300">
    <property type="entry name" value="His_Phos_1"/>
    <property type="match status" value="2"/>
</dbReference>
<dbReference type="SMART" id="SM00855">
    <property type="entry name" value="PGAM"/>
    <property type="match status" value="1"/>
</dbReference>
<dbReference type="SUPFAM" id="SSF53254">
    <property type="entry name" value="Phosphoglycerate mutase-like"/>
    <property type="match status" value="1"/>
</dbReference>
<sequence length="275" mass="30986">MYLRRALIAGGSAAAAILGVVAAGKSKGGSDSEILSVAPPATGQWDRNWDRREPISMVNLSKINAETGEEELQLHLNKHKPKATRHIFLIRHSQYKLDGKTDFDRVLTPLGREQADLTGQRLASLGHKYNHIVYSTMTRAKETTEIISKYLPDVNKSSSDLLREGAPIRPEPQVCHWKPDFVYYEDGPRIEAAFRHFIHRADPKQEEDSYEILICHANVIRYVVCRALQFPPEAWLRISLNNGSITYLVIRPNGNVSIRMLGDSGFMPAEKISRT</sequence>
<feature type="chain" id="PRO_0000288786" description="Serine/threonine-protein phosphatase PGAM5, mitochondrial">
    <location>
        <begin position="1"/>
        <end position="275"/>
    </location>
</feature>
<feature type="transmembrane region" description="Helical" evidence="2">
    <location>
        <begin position="7"/>
        <end position="24"/>
    </location>
</feature>
<protein>
    <recommendedName>
        <fullName>Serine/threonine-protein phosphatase PGAM5, mitochondrial</fullName>
        <ecNumber>3.1.3.16</ecNumber>
    </recommendedName>
    <alternativeName>
        <fullName>Phosphoglycerate mutase family member 5</fullName>
    </alternativeName>
</protein>
<reference key="1">
    <citation type="submission" date="2005-01" db="EMBL/GenBank/DDBJ databases">
        <authorList>
            <consortium name="NIH - Xenopus Gene Collection (XGC) project"/>
        </authorList>
    </citation>
    <scope>NUCLEOTIDE SEQUENCE [LARGE SCALE MRNA]</scope>
    <source>
        <tissue>Egg</tissue>
        <tissue>Embryo</tissue>
    </source>
</reference>
<proteinExistence type="evidence at transcript level"/>
<accession>Q5FWM4</accession>
<accession>Q8AVL5</accession>
<organism>
    <name type="scientific">Xenopus laevis</name>
    <name type="common">African clawed frog</name>
    <dbReference type="NCBI Taxonomy" id="8355"/>
    <lineage>
        <taxon>Eukaryota</taxon>
        <taxon>Metazoa</taxon>
        <taxon>Chordata</taxon>
        <taxon>Craniata</taxon>
        <taxon>Vertebrata</taxon>
        <taxon>Euteleostomi</taxon>
        <taxon>Amphibia</taxon>
        <taxon>Batrachia</taxon>
        <taxon>Anura</taxon>
        <taxon>Pipoidea</taxon>
        <taxon>Pipidae</taxon>
        <taxon>Xenopodinae</taxon>
        <taxon>Xenopus</taxon>
        <taxon>Xenopus</taxon>
    </lineage>
</organism>
<gene>
    <name type="primary">pgam5</name>
</gene>
<comment type="function">
    <text evidence="1">Displays phosphatase activity for serine/threonine residues. Has apparently no phosphoglycerate mutase activity. May be regulator of mitochondrial dynamics (By similarity). May be a central mediator for programmed necrosis (By similarity).</text>
</comment>
<comment type="catalytic activity">
    <reaction>
        <text>O-phospho-L-seryl-[protein] + H2O = L-seryl-[protein] + phosphate</text>
        <dbReference type="Rhea" id="RHEA:20629"/>
        <dbReference type="Rhea" id="RHEA-COMP:9863"/>
        <dbReference type="Rhea" id="RHEA-COMP:11604"/>
        <dbReference type="ChEBI" id="CHEBI:15377"/>
        <dbReference type="ChEBI" id="CHEBI:29999"/>
        <dbReference type="ChEBI" id="CHEBI:43474"/>
        <dbReference type="ChEBI" id="CHEBI:83421"/>
        <dbReference type="EC" id="3.1.3.16"/>
    </reaction>
</comment>
<comment type="catalytic activity">
    <reaction>
        <text>O-phospho-L-threonyl-[protein] + H2O = L-threonyl-[protein] + phosphate</text>
        <dbReference type="Rhea" id="RHEA:47004"/>
        <dbReference type="Rhea" id="RHEA-COMP:11060"/>
        <dbReference type="Rhea" id="RHEA-COMP:11605"/>
        <dbReference type="ChEBI" id="CHEBI:15377"/>
        <dbReference type="ChEBI" id="CHEBI:30013"/>
        <dbReference type="ChEBI" id="CHEBI:43474"/>
        <dbReference type="ChEBI" id="CHEBI:61977"/>
        <dbReference type="EC" id="3.1.3.16"/>
    </reaction>
</comment>
<comment type="subcellular location">
    <subcellularLocation>
        <location evidence="1">Mitochondrion outer membrane</location>
        <topology evidence="1">Single-pass membrane protein</topology>
    </subcellularLocation>
</comment>
<comment type="domain">
    <text evidence="1">The N-terminal 35 amino acids, including the potential transmembrane alpha-helix, function as a non-cleaved mitochondrial targeting sequence that targets the protein to the cytosolic side of the outer mitochondrial membrane.</text>
</comment>
<comment type="PTM">
    <text evidence="1">Phosphorylated by the RIPK1/RIPK3 complex under necrotic conditions. This phosphorylation increases PGAM5 phosphatase activity (By similarity).</text>
</comment>
<comment type="similarity">
    <text evidence="3">Belongs to the phosphoglycerate mutase family. BPG-dependent PGAM subfamily.</text>
</comment>
<comment type="sequence caution" evidence="3">
    <conflict type="frameshift">
        <sequence resource="EMBL-CDS" id="AAH41756"/>
    </conflict>
</comment>
<name>PGAM5_XENLA</name>
<keyword id="KW-0378">Hydrolase</keyword>
<keyword id="KW-0472">Membrane</keyword>
<keyword id="KW-0496">Mitochondrion</keyword>
<keyword id="KW-1000">Mitochondrion outer membrane</keyword>
<keyword id="KW-1210">Necrosis</keyword>
<keyword id="KW-1185">Reference proteome</keyword>
<keyword id="KW-0812">Transmembrane</keyword>
<keyword id="KW-1133">Transmembrane helix</keyword>